<dbReference type="EC" id="2.7.11.1"/>
<dbReference type="EMBL" id="CP017623">
    <property type="protein sequence ID" value="AOW26667.1"/>
    <property type="molecule type" value="Genomic_DNA"/>
</dbReference>
<dbReference type="RefSeq" id="XP_723591.2">
    <property type="nucleotide sequence ID" value="XM_718498.2"/>
</dbReference>
<dbReference type="SMR" id="Q5AP53"/>
<dbReference type="BioGRID" id="1217932">
    <property type="interactions" value="72"/>
</dbReference>
<dbReference type="FunCoup" id="Q5AP53">
    <property type="interactions" value="589"/>
</dbReference>
<dbReference type="STRING" id="237561.Q5AP53"/>
<dbReference type="EnsemblFungi" id="C1_10380C_A-T">
    <property type="protein sequence ID" value="C1_10380C_A-T-p1"/>
    <property type="gene ID" value="C1_10380C_A"/>
</dbReference>
<dbReference type="GeneID" id="3634838"/>
<dbReference type="KEGG" id="cal:CAALFM_C110380CA"/>
<dbReference type="CGD" id="CAL0000198853">
    <property type="gene designation" value="CBK1"/>
</dbReference>
<dbReference type="VEuPathDB" id="FungiDB:C1_10380C_A"/>
<dbReference type="eggNOG" id="KOG0605">
    <property type="taxonomic scope" value="Eukaryota"/>
</dbReference>
<dbReference type="HOGENOM" id="CLU_000288_67_2_1"/>
<dbReference type="InParanoid" id="Q5AP53"/>
<dbReference type="OrthoDB" id="3638488at2759"/>
<dbReference type="PRO" id="PR:Q5AP53"/>
<dbReference type="Proteomes" id="UP000000559">
    <property type="component" value="Chromosome 1"/>
</dbReference>
<dbReference type="GO" id="GO:0005938">
    <property type="term" value="C:cell cortex"/>
    <property type="evidence" value="ECO:0000314"/>
    <property type="project" value="CGD"/>
</dbReference>
<dbReference type="GO" id="GO:0030428">
    <property type="term" value="C:cell septum"/>
    <property type="evidence" value="ECO:0000314"/>
    <property type="project" value="CGD"/>
</dbReference>
<dbReference type="GO" id="GO:0005935">
    <property type="term" value="C:cellular bud neck"/>
    <property type="evidence" value="ECO:0000314"/>
    <property type="project" value="CGD"/>
</dbReference>
<dbReference type="GO" id="GO:0005934">
    <property type="term" value="C:cellular bud tip"/>
    <property type="evidence" value="ECO:0007669"/>
    <property type="project" value="EnsemblFungi"/>
</dbReference>
<dbReference type="GO" id="GO:0001411">
    <property type="term" value="C:hyphal tip"/>
    <property type="evidence" value="ECO:0000314"/>
    <property type="project" value="CGD"/>
</dbReference>
<dbReference type="GO" id="GO:0000131">
    <property type="term" value="C:incipient cellular bud site"/>
    <property type="evidence" value="ECO:0007669"/>
    <property type="project" value="EnsemblFungi"/>
</dbReference>
<dbReference type="GO" id="GO:0043332">
    <property type="term" value="C:mating projection tip"/>
    <property type="evidence" value="ECO:0007669"/>
    <property type="project" value="EnsemblFungi"/>
</dbReference>
<dbReference type="GO" id="GO:0005634">
    <property type="term" value="C:nucleus"/>
    <property type="evidence" value="ECO:0007669"/>
    <property type="project" value="EnsemblFungi"/>
</dbReference>
<dbReference type="GO" id="GO:1902554">
    <property type="term" value="C:serine/threonine protein kinase complex"/>
    <property type="evidence" value="ECO:0007669"/>
    <property type="project" value="EnsemblFungi"/>
</dbReference>
<dbReference type="GO" id="GO:0005524">
    <property type="term" value="F:ATP binding"/>
    <property type="evidence" value="ECO:0007669"/>
    <property type="project" value="UniProtKB-KW"/>
</dbReference>
<dbReference type="GO" id="GO:0042802">
    <property type="term" value="F:identical protein binding"/>
    <property type="evidence" value="ECO:0007669"/>
    <property type="project" value="EnsemblFungi"/>
</dbReference>
<dbReference type="GO" id="GO:0004672">
    <property type="term" value="F:protein kinase activity"/>
    <property type="evidence" value="ECO:0000315"/>
    <property type="project" value="CGD"/>
</dbReference>
<dbReference type="GO" id="GO:0106310">
    <property type="term" value="F:protein serine kinase activity"/>
    <property type="evidence" value="ECO:0007669"/>
    <property type="project" value="RHEA"/>
</dbReference>
<dbReference type="GO" id="GO:0004674">
    <property type="term" value="F:protein serine/threonine kinase activity"/>
    <property type="evidence" value="ECO:0000316"/>
    <property type="project" value="CGD"/>
</dbReference>
<dbReference type="GO" id="GO:0007118">
    <property type="term" value="P:budding cell apical bud growth"/>
    <property type="evidence" value="ECO:0007669"/>
    <property type="project" value="EnsemblFungi"/>
</dbReference>
<dbReference type="GO" id="GO:0000902">
    <property type="term" value="P:cell morphogenesis"/>
    <property type="evidence" value="ECO:0000315"/>
    <property type="project" value="CGD"/>
</dbReference>
<dbReference type="GO" id="GO:0034605">
    <property type="term" value="P:cellular response to heat"/>
    <property type="evidence" value="ECO:0000315"/>
    <property type="project" value="CGD"/>
</dbReference>
<dbReference type="GO" id="GO:0036244">
    <property type="term" value="P:cellular response to neutral pH"/>
    <property type="evidence" value="ECO:0000315"/>
    <property type="project" value="CGD"/>
</dbReference>
<dbReference type="GO" id="GO:0009267">
    <property type="term" value="P:cellular response to starvation"/>
    <property type="evidence" value="ECO:0000315"/>
    <property type="project" value="CGD"/>
</dbReference>
<dbReference type="GO" id="GO:0030950">
    <property type="term" value="P:establishment or maintenance of actin cytoskeleton polarity"/>
    <property type="evidence" value="ECO:0007669"/>
    <property type="project" value="EnsemblFungi"/>
</dbReference>
<dbReference type="GO" id="GO:0007163">
    <property type="term" value="P:establishment or maintenance of cell polarity"/>
    <property type="evidence" value="ECO:0000315"/>
    <property type="project" value="CGD"/>
</dbReference>
<dbReference type="GO" id="GO:0030447">
    <property type="term" value="P:filamentous growth"/>
    <property type="evidence" value="ECO:0000315"/>
    <property type="project" value="CGD"/>
</dbReference>
<dbReference type="GO" id="GO:0036180">
    <property type="term" value="P:filamentous growth of a population of unicellular organisms in response to biotic stimulus"/>
    <property type="evidence" value="ECO:0000315"/>
    <property type="project" value="CGD"/>
</dbReference>
<dbReference type="GO" id="GO:0036168">
    <property type="term" value="P:filamentous growth of a population of unicellular organisms in response to heat"/>
    <property type="evidence" value="ECO:0000315"/>
    <property type="project" value="CGD"/>
</dbReference>
<dbReference type="GO" id="GO:0036178">
    <property type="term" value="P:filamentous growth of a population of unicellular organisms in response to neutral pH"/>
    <property type="evidence" value="ECO:0000315"/>
    <property type="project" value="CGD"/>
</dbReference>
<dbReference type="GO" id="GO:0036170">
    <property type="term" value="P:filamentous growth of a population of unicellular organisms in response to starvation"/>
    <property type="evidence" value="ECO:0000315"/>
    <property type="project" value="CGD"/>
</dbReference>
<dbReference type="GO" id="GO:0044180">
    <property type="term" value="P:filamentous growth of a unicellular organism"/>
    <property type="evidence" value="ECO:0000315"/>
    <property type="project" value="CGD"/>
</dbReference>
<dbReference type="GO" id="GO:0031505">
    <property type="term" value="P:fungal-type cell wall organization"/>
    <property type="evidence" value="ECO:0000315"/>
    <property type="project" value="CGD"/>
</dbReference>
<dbReference type="GO" id="GO:0035556">
    <property type="term" value="P:intracellular signal transduction"/>
    <property type="evidence" value="ECO:0000318"/>
    <property type="project" value="GO_Central"/>
</dbReference>
<dbReference type="GO" id="GO:0031579">
    <property type="term" value="P:membrane raft organization"/>
    <property type="evidence" value="ECO:0000315"/>
    <property type="project" value="CGD"/>
</dbReference>
<dbReference type="GO" id="GO:0090033">
    <property type="term" value="P:positive regulation of filamentous growth"/>
    <property type="evidence" value="ECO:0000315"/>
    <property type="project" value="CGD"/>
</dbReference>
<dbReference type="GO" id="GO:1900433">
    <property type="term" value="P:positive regulation of filamentous growth of a population of unicellular organisms in response to heat"/>
    <property type="evidence" value="ECO:0000315"/>
    <property type="project" value="CGD"/>
</dbReference>
<dbReference type="GO" id="GO:1900442">
    <property type="term" value="P:positive regulation of filamentous growth of a population of unicellular organisms in response to neutral pH"/>
    <property type="evidence" value="ECO:0000315"/>
    <property type="project" value="CGD"/>
</dbReference>
<dbReference type="GO" id="GO:1900233">
    <property type="term" value="P:positive regulation of single-species biofilm formation on inanimate substrate"/>
    <property type="evidence" value="ECO:0000315"/>
    <property type="project" value="CGD"/>
</dbReference>
<dbReference type="GO" id="GO:0060237">
    <property type="term" value="P:regulation of fungal-type cell wall organization"/>
    <property type="evidence" value="ECO:0007669"/>
    <property type="project" value="EnsemblFungi"/>
</dbReference>
<dbReference type="GO" id="GO:0050708">
    <property type="term" value="P:regulation of protein secretion"/>
    <property type="evidence" value="ECO:0007669"/>
    <property type="project" value="EnsemblFungi"/>
</dbReference>
<dbReference type="GO" id="GO:0006357">
    <property type="term" value="P:regulation of transcription by RNA polymerase II"/>
    <property type="evidence" value="ECO:0000315"/>
    <property type="project" value="CGD"/>
</dbReference>
<dbReference type="GO" id="GO:0000920">
    <property type="term" value="P:septum digestion after cytokinesis"/>
    <property type="evidence" value="ECO:0000315"/>
    <property type="project" value="CGD"/>
</dbReference>
<dbReference type="GO" id="GO:0044010">
    <property type="term" value="P:single-species biofilm formation"/>
    <property type="evidence" value="ECO:0000315"/>
    <property type="project" value="CGD"/>
</dbReference>
<dbReference type="GO" id="GO:0044011">
    <property type="term" value="P:single-species biofilm formation on inanimate substrate"/>
    <property type="evidence" value="ECO:0000315"/>
    <property type="project" value="CGD"/>
</dbReference>
<dbReference type="CDD" id="cd21773">
    <property type="entry name" value="MobB_CBK1"/>
    <property type="match status" value="1"/>
</dbReference>
<dbReference type="FunFam" id="1.10.510.10:FF:000086">
    <property type="entry name" value="Non-specific serine/threonine protein kinase"/>
    <property type="match status" value="1"/>
</dbReference>
<dbReference type="FunFam" id="1.10.510.10:FF:000828">
    <property type="entry name" value="Serine/threonine-protein kinase CBK1"/>
    <property type="match status" value="1"/>
</dbReference>
<dbReference type="FunFam" id="3.30.200.20:FF:000192">
    <property type="entry name" value="Serine/threonine-protein kinase cot-1"/>
    <property type="match status" value="1"/>
</dbReference>
<dbReference type="Gene3D" id="3.30.200.20">
    <property type="entry name" value="Phosphorylase Kinase, domain 1"/>
    <property type="match status" value="1"/>
</dbReference>
<dbReference type="Gene3D" id="1.10.510.10">
    <property type="entry name" value="Transferase(Phosphotransferase) domain 1"/>
    <property type="match status" value="1"/>
</dbReference>
<dbReference type="InterPro" id="IPR000961">
    <property type="entry name" value="AGC-kinase_C"/>
</dbReference>
<dbReference type="InterPro" id="IPR011009">
    <property type="entry name" value="Kinase-like_dom_sf"/>
</dbReference>
<dbReference type="InterPro" id="IPR000719">
    <property type="entry name" value="Prot_kinase_dom"/>
</dbReference>
<dbReference type="InterPro" id="IPR017441">
    <property type="entry name" value="Protein_kinase_ATP_BS"/>
</dbReference>
<dbReference type="InterPro" id="IPR050839">
    <property type="entry name" value="Rho-assoc_Ser/Thr_Kinase"/>
</dbReference>
<dbReference type="InterPro" id="IPR008271">
    <property type="entry name" value="Ser/Thr_kinase_AS"/>
</dbReference>
<dbReference type="PANTHER" id="PTHR22988:SF76">
    <property type="entry name" value="CHROMOSOME UNDETERMINED SCAFFOLD_135, WHOLE GENOME SHOTGUN SEQUENCE"/>
    <property type="match status" value="1"/>
</dbReference>
<dbReference type="PANTHER" id="PTHR22988">
    <property type="entry name" value="MYOTONIC DYSTROPHY S/T KINASE-RELATED"/>
    <property type="match status" value="1"/>
</dbReference>
<dbReference type="Pfam" id="PF00069">
    <property type="entry name" value="Pkinase"/>
    <property type="match status" value="2"/>
</dbReference>
<dbReference type="SMART" id="SM00133">
    <property type="entry name" value="S_TK_X"/>
    <property type="match status" value="1"/>
</dbReference>
<dbReference type="SMART" id="SM00220">
    <property type="entry name" value="S_TKc"/>
    <property type="match status" value="1"/>
</dbReference>
<dbReference type="SUPFAM" id="SSF81995">
    <property type="entry name" value="beta-sandwich domain of Sec23/24"/>
    <property type="match status" value="1"/>
</dbReference>
<dbReference type="SUPFAM" id="SSF56112">
    <property type="entry name" value="Protein kinase-like (PK-like)"/>
    <property type="match status" value="1"/>
</dbReference>
<dbReference type="PROSITE" id="PS51285">
    <property type="entry name" value="AGC_KINASE_CTER"/>
    <property type="match status" value="1"/>
</dbReference>
<dbReference type="PROSITE" id="PS00107">
    <property type="entry name" value="PROTEIN_KINASE_ATP"/>
    <property type="match status" value="1"/>
</dbReference>
<dbReference type="PROSITE" id="PS50011">
    <property type="entry name" value="PROTEIN_KINASE_DOM"/>
    <property type="match status" value="1"/>
</dbReference>
<dbReference type="PROSITE" id="PS00108">
    <property type="entry name" value="PROTEIN_KINASE_ST"/>
    <property type="match status" value="1"/>
</dbReference>
<sequence>MNFDQLTDEQKQQLYLQHLQQQQQLQQQQQQLQQQQHQLQQQQQSYHLQQQQAAYQQQNQAQLQQDDSYMDEDTSELINQPPVQLDHGSPIRQQPQMSAFMPSPRFAQSESFDNHLNVDPNNTERFTSMDSMNFQPPASTFTQLGNGSSTNLSEISSGQNSLLSNHSVNNLPTALTSDTSPPVQQHPQFQPQQQQQQQQPQQQQIFQQQQQQQQQQQQPQQSRAVVNQSVSTEAANSDMTGSNTKYVYFERKPNLLSKTTQDKAASIKLTLENYYTSSVSHAIERNQRRLELENKIANEDIGSSEERKNRQLQNLGKKESQFLRLKRTKLALEDFHTVKVIGKGAFGEVRLVQKKDTGKIYAMKTLLKSEMFNKDQLAHVKAERDVLAGSDSPWIVALYYSFQDSQYLYLIMEFLPGGDLMTMLIRWEVFTEDITRFYIAECVLAIEAIHKLGFIHRDIKPDNILIDNRGHVKLSDFGLSTGFHKTHDSNYYNKLLEKEPSNTHLQPNQLTSGRNSVMVDAIHLTMSNRQTMQTWRKSRRLMAYSTVGTPDYIAPEIFIHQGYGQECDWWSLGAIMFECLIGWPPFCSENPHDTYRKILNWQESFQIPEDVHLSPEAEDLIKRFLTSAENRIGRYGGAEEIKQHPFFRGVDWDSIRDVQAPFVPRLSSMTDTRHFPTDDLASVPDNPAMSKAMEQRELDAKNGGGRKNPKEDLPFIGYTYSRFDYLTRKNAL</sequence>
<reference key="1">
    <citation type="journal article" date="2004" name="Proc. Natl. Acad. Sci. U.S.A.">
        <title>The diploid genome sequence of Candida albicans.</title>
        <authorList>
            <person name="Jones T."/>
            <person name="Federspiel N.A."/>
            <person name="Chibana H."/>
            <person name="Dungan J."/>
            <person name="Kalman S."/>
            <person name="Magee B.B."/>
            <person name="Newport G."/>
            <person name="Thorstenson Y.R."/>
            <person name="Agabian N."/>
            <person name="Magee P.T."/>
            <person name="Davis R.W."/>
            <person name="Scherer S."/>
        </authorList>
    </citation>
    <scope>NUCLEOTIDE SEQUENCE [LARGE SCALE GENOMIC DNA]</scope>
    <source>
        <strain>SC5314 / ATCC MYA-2876</strain>
    </source>
</reference>
<reference key="2">
    <citation type="journal article" date="2007" name="Genome Biol.">
        <title>Assembly of the Candida albicans genome into sixteen supercontigs aligned on the eight chromosomes.</title>
        <authorList>
            <person name="van het Hoog M."/>
            <person name="Rast T.J."/>
            <person name="Martchenko M."/>
            <person name="Grindle S."/>
            <person name="Dignard D."/>
            <person name="Hogues H."/>
            <person name="Cuomo C."/>
            <person name="Berriman M."/>
            <person name="Scherer S."/>
            <person name="Magee B.B."/>
            <person name="Whiteway M."/>
            <person name="Chibana H."/>
            <person name="Nantel A."/>
            <person name="Magee P.T."/>
        </authorList>
    </citation>
    <scope>GENOME REANNOTATION</scope>
    <source>
        <strain>SC5314 / ATCC MYA-2876</strain>
    </source>
</reference>
<reference key="3">
    <citation type="journal article" date="2013" name="Genome Biol.">
        <title>Assembly of a phased diploid Candida albicans genome facilitates allele-specific measurements and provides a simple model for repeat and indel structure.</title>
        <authorList>
            <person name="Muzzey D."/>
            <person name="Schwartz K."/>
            <person name="Weissman J.S."/>
            <person name="Sherlock G."/>
        </authorList>
    </citation>
    <scope>NUCLEOTIDE SEQUENCE [LARGE SCALE GENOMIC DNA]</scope>
    <scope>GENOME REANNOTATION</scope>
    <source>
        <strain>SC5314 / ATCC MYA-2876</strain>
    </source>
</reference>
<reference key="4">
    <citation type="journal article" date="2002" name="J. Bacteriol.">
        <title>Conserved serine/threonine kinase encoded by CBK1 regulates expression of several hypha-associated transcripts and genes encoding cell wall proteins in Candida albicans.</title>
        <authorList>
            <person name="McNemar M.D."/>
            <person name="Fonzi W.A."/>
        </authorList>
    </citation>
    <scope>FUNCTION</scope>
</reference>
<reference key="5">
    <citation type="journal article" date="2008" name="Mol. Biol. Cell">
        <title>Role of the RAM network in cell polarity and hyphal morphogenesis in Candida albicans.</title>
        <authorList>
            <person name="Song Y."/>
            <person name="Cheon S.A."/>
            <person name="Lee K.E."/>
            <person name="Lee S.Y."/>
            <person name="Lee B.K."/>
            <person name="Oh D.B."/>
            <person name="Kang H.A."/>
            <person name="Kim J.Y."/>
        </authorList>
    </citation>
    <scope>FUNCTION</scope>
    <scope>INTERACTION WITH MOB2</scope>
</reference>
<reference key="6">
    <citation type="journal article" date="2011" name="Mol. Biol. Cell">
        <title>CDK-dependent phosphorylation of Mob2 is essential for hyphal development in Candida albicans.</title>
        <authorList>
            <person name="Gutierrez-Escribano P."/>
            <person name="Gonzalez-Novo A."/>
            <person name="Suarez M.B."/>
            <person name="Li C.R."/>
            <person name="Wang Y."/>
            <person name="de Aldana C.R."/>
            <person name="Correa-Bordes J."/>
        </authorList>
    </citation>
    <scope>SUBCELLULAR LOCATION</scope>
    <scope>FUNCTION</scope>
</reference>
<reference key="7">
    <citation type="journal article" date="2012" name="PLoS Pathog.">
        <title>The NDR/LATS kinase Cbk1 controls the activity of the transcriptional regulator Bcr1 during biofilm formation in Candida albicans.</title>
        <authorList>
            <person name="Gutierrez-Escribano P."/>
            <person name="Zeidler U."/>
            <person name="Suarez M.B."/>
            <person name="Bachellier-Bassi S."/>
            <person name="Clemente-Blanco A."/>
            <person name="Bonhomme J."/>
            <person name="Vazquez de Aldana C.R."/>
            <person name="d'Enfert C."/>
            <person name="Correa-Bordes J."/>
        </authorList>
    </citation>
    <scope>FUNCTION</scope>
    <scope>INTERACTION WITH BCR1</scope>
</reference>
<proteinExistence type="evidence at protein level"/>
<feature type="chain" id="PRO_0000420233" description="Serine/threonine-protein kinase CBK1">
    <location>
        <begin position="1"/>
        <end position="732"/>
    </location>
</feature>
<feature type="domain" description="Protein kinase" evidence="2">
    <location>
        <begin position="335"/>
        <end position="647"/>
    </location>
</feature>
<feature type="domain" description="AGC-kinase C-terminal" evidence="3">
    <location>
        <begin position="648"/>
        <end position="730"/>
    </location>
</feature>
<feature type="region of interest" description="Disordered" evidence="5">
    <location>
        <begin position="111"/>
        <end position="240"/>
    </location>
</feature>
<feature type="coiled-coil region" evidence="1">
    <location>
        <begin position="281"/>
        <end position="310"/>
    </location>
</feature>
<feature type="compositionally biased region" description="Polar residues" evidence="5">
    <location>
        <begin position="119"/>
        <end position="159"/>
    </location>
</feature>
<feature type="compositionally biased region" description="Low complexity" evidence="5">
    <location>
        <begin position="160"/>
        <end position="171"/>
    </location>
</feature>
<feature type="compositionally biased region" description="Polar residues" evidence="5">
    <location>
        <begin position="172"/>
        <end position="183"/>
    </location>
</feature>
<feature type="compositionally biased region" description="Low complexity" evidence="5">
    <location>
        <begin position="185"/>
        <end position="221"/>
    </location>
</feature>
<feature type="compositionally biased region" description="Polar residues" evidence="5">
    <location>
        <begin position="222"/>
        <end position="240"/>
    </location>
</feature>
<feature type="active site" description="Proton acceptor" evidence="2 4">
    <location>
        <position position="458"/>
    </location>
</feature>
<feature type="binding site" evidence="2">
    <location>
        <begin position="341"/>
        <end position="349"/>
    </location>
    <ligand>
        <name>ATP</name>
        <dbReference type="ChEBI" id="CHEBI:30616"/>
    </ligand>
</feature>
<feature type="binding site" evidence="2">
    <location>
        <position position="364"/>
    </location>
    <ligand>
        <name>ATP</name>
        <dbReference type="ChEBI" id="CHEBI:30616"/>
    </ligand>
</feature>
<protein>
    <recommendedName>
        <fullName>Serine/threonine-protein kinase CBK1</fullName>
        <ecNumber>2.7.11.1</ecNumber>
    </recommendedName>
    <alternativeName>
        <fullName>Cell wall biosynthesis kinase 1</fullName>
    </alternativeName>
</protein>
<comment type="function">
    <text evidence="6 7 8 9">Serine/threonine-protein kinase required for wild-type hyphal growth and transcriptional regulation of cell-wall-associated genes. Involved in the biofilm formation through phosphorylation of the master regulator of biofilm formation BCR1.</text>
</comment>
<comment type="catalytic activity">
    <reaction>
        <text>L-seryl-[protein] + ATP = O-phospho-L-seryl-[protein] + ADP + H(+)</text>
        <dbReference type="Rhea" id="RHEA:17989"/>
        <dbReference type="Rhea" id="RHEA-COMP:9863"/>
        <dbReference type="Rhea" id="RHEA-COMP:11604"/>
        <dbReference type="ChEBI" id="CHEBI:15378"/>
        <dbReference type="ChEBI" id="CHEBI:29999"/>
        <dbReference type="ChEBI" id="CHEBI:30616"/>
        <dbReference type="ChEBI" id="CHEBI:83421"/>
        <dbReference type="ChEBI" id="CHEBI:456216"/>
        <dbReference type="EC" id="2.7.11.1"/>
    </reaction>
</comment>
<comment type="catalytic activity">
    <reaction>
        <text>L-threonyl-[protein] + ATP = O-phospho-L-threonyl-[protein] + ADP + H(+)</text>
        <dbReference type="Rhea" id="RHEA:46608"/>
        <dbReference type="Rhea" id="RHEA-COMP:11060"/>
        <dbReference type="Rhea" id="RHEA-COMP:11605"/>
        <dbReference type="ChEBI" id="CHEBI:15378"/>
        <dbReference type="ChEBI" id="CHEBI:30013"/>
        <dbReference type="ChEBI" id="CHEBI:30616"/>
        <dbReference type="ChEBI" id="CHEBI:61977"/>
        <dbReference type="ChEBI" id="CHEBI:456216"/>
        <dbReference type="EC" id="2.7.11.1"/>
    </reaction>
</comment>
<comment type="subunit">
    <text evidence="7 9">Interacts with MOB2 and BCR1.</text>
</comment>
<comment type="subcellular location">
    <subcellularLocation>
        <location evidence="8">Bud neck</location>
    </subcellularLocation>
    <subcellularLocation>
        <location evidence="8">Cell tip</location>
    </subcellularLocation>
    <text>In yeast cells, localizes to the cell cortex of small- and medium-budded cells and to the bud neck in large-budded cells. During hyphal growth, is present at the tip of hyphae and in the region of the septum.</text>
</comment>
<comment type="similarity">
    <text evidence="10">Belongs to the protein kinase superfamily. STE Ser/Thr protein kinase family. COT1 subfamily.</text>
</comment>
<organism>
    <name type="scientific">Candida albicans (strain SC5314 / ATCC MYA-2876)</name>
    <name type="common">Yeast</name>
    <dbReference type="NCBI Taxonomy" id="237561"/>
    <lineage>
        <taxon>Eukaryota</taxon>
        <taxon>Fungi</taxon>
        <taxon>Dikarya</taxon>
        <taxon>Ascomycota</taxon>
        <taxon>Saccharomycotina</taxon>
        <taxon>Pichiomycetes</taxon>
        <taxon>Debaryomycetaceae</taxon>
        <taxon>Candida/Lodderomyces clade</taxon>
        <taxon>Candida</taxon>
    </lineage>
</organism>
<evidence type="ECO:0000255" key="1"/>
<evidence type="ECO:0000255" key="2">
    <source>
        <dbReference type="PROSITE-ProRule" id="PRU00159"/>
    </source>
</evidence>
<evidence type="ECO:0000255" key="3">
    <source>
        <dbReference type="PROSITE-ProRule" id="PRU00618"/>
    </source>
</evidence>
<evidence type="ECO:0000255" key="4">
    <source>
        <dbReference type="PROSITE-ProRule" id="PRU10027"/>
    </source>
</evidence>
<evidence type="ECO:0000256" key="5">
    <source>
        <dbReference type="SAM" id="MobiDB-lite"/>
    </source>
</evidence>
<evidence type="ECO:0000269" key="6">
    <source>
    </source>
</evidence>
<evidence type="ECO:0000269" key="7">
    <source>
    </source>
</evidence>
<evidence type="ECO:0000269" key="8">
    <source>
    </source>
</evidence>
<evidence type="ECO:0000269" key="9">
    <source>
    </source>
</evidence>
<evidence type="ECO:0000305" key="10"/>
<accession>Q5AP53</accession>
<accession>A0A1D8PEW5</accession>
<gene>
    <name type="primary">CBK1</name>
    <name type="ordered locus">CAALFM_C110380CA</name>
    <name type="ORF">CaO19.12375</name>
    <name type="ORF">CaO19.4909</name>
</gene>
<keyword id="KW-0067">ATP-binding</keyword>
<keyword id="KW-0175">Coiled coil</keyword>
<keyword id="KW-0418">Kinase</keyword>
<keyword id="KW-0547">Nucleotide-binding</keyword>
<keyword id="KW-0597">Phosphoprotein</keyword>
<keyword id="KW-1185">Reference proteome</keyword>
<keyword id="KW-0723">Serine/threonine-protein kinase</keyword>
<keyword id="KW-0808">Transferase</keyword>
<name>CBK1_CANAL</name>